<name>RL11_PROM4</name>
<comment type="function">
    <text evidence="1">Forms part of the ribosomal stalk which helps the ribosome interact with GTP-bound translation factors.</text>
</comment>
<comment type="subunit">
    <text evidence="1">Part of the ribosomal stalk of the 50S ribosomal subunit. Interacts with L10 and the large rRNA to form the base of the stalk. L10 forms an elongated spine to which L12 dimers bind in a sequential fashion forming a multimeric L10(L12)X complex.</text>
</comment>
<comment type="PTM">
    <text evidence="1">One or more lysine residues are methylated.</text>
</comment>
<comment type="similarity">
    <text evidence="1">Belongs to the universal ribosomal protein uL11 family.</text>
</comment>
<accession>A9BDG7</accession>
<proteinExistence type="inferred from homology"/>
<evidence type="ECO:0000255" key="1">
    <source>
        <dbReference type="HAMAP-Rule" id="MF_00736"/>
    </source>
</evidence>
<evidence type="ECO:0000305" key="2"/>
<sequence>MAKKIVAVIKLALQAGKANPAPPVGPALGQHGVNIMAFCKEYNAKTQDKAGFVIPVEISVFEDRSFTFITKTPPASVLITKAAGIEKGSGDSAKGQVGTINRAQLEEIAKTKLPDLNCSNIESAMRVIEGTARNMGVSVKD</sequence>
<feature type="chain" id="PRO_1000195691" description="Large ribosomal subunit protein uL11">
    <location>
        <begin position="1"/>
        <end position="141"/>
    </location>
</feature>
<protein>
    <recommendedName>
        <fullName evidence="1">Large ribosomal subunit protein uL11</fullName>
    </recommendedName>
    <alternativeName>
        <fullName evidence="2">50S ribosomal protein L11</fullName>
    </alternativeName>
</protein>
<dbReference type="EMBL" id="CP000878">
    <property type="protein sequence ID" value="ABX08153.1"/>
    <property type="molecule type" value="Genomic_DNA"/>
</dbReference>
<dbReference type="RefSeq" id="WP_012194778.1">
    <property type="nucleotide sequence ID" value="NC_009976.1"/>
</dbReference>
<dbReference type="SMR" id="A9BDG7"/>
<dbReference type="STRING" id="93059.P9211_02221"/>
<dbReference type="KEGG" id="pmj:P9211_02221"/>
<dbReference type="eggNOG" id="COG0080">
    <property type="taxonomic scope" value="Bacteria"/>
</dbReference>
<dbReference type="HOGENOM" id="CLU_074237_2_1_3"/>
<dbReference type="OrthoDB" id="9802408at2"/>
<dbReference type="Proteomes" id="UP000000788">
    <property type="component" value="Chromosome"/>
</dbReference>
<dbReference type="GO" id="GO:0022625">
    <property type="term" value="C:cytosolic large ribosomal subunit"/>
    <property type="evidence" value="ECO:0007669"/>
    <property type="project" value="TreeGrafter"/>
</dbReference>
<dbReference type="GO" id="GO:0070180">
    <property type="term" value="F:large ribosomal subunit rRNA binding"/>
    <property type="evidence" value="ECO:0007669"/>
    <property type="project" value="UniProtKB-UniRule"/>
</dbReference>
<dbReference type="GO" id="GO:0003735">
    <property type="term" value="F:structural constituent of ribosome"/>
    <property type="evidence" value="ECO:0007669"/>
    <property type="project" value="InterPro"/>
</dbReference>
<dbReference type="GO" id="GO:0006412">
    <property type="term" value="P:translation"/>
    <property type="evidence" value="ECO:0007669"/>
    <property type="project" value="UniProtKB-UniRule"/>
</dbReference>
<dbReference type="CDD" id="cd00349">
    <property type="entry name" value="Ribosomal_L11"/>
    <property type="match status" value="1"/>
</dbReference>
<dbReference type="FunFam" id="1.10.10.250:FF:000001">
    <property type="entry name" value="50S ribosomal protein L11"/>
    <property type="match status" value="1"/>
</dbReference>
<dbReference type="FunFam" id="3.30.1550.10:FF:000001">
    <property type="entry name" value="50S ribosomal protein L11"/>
    <property type="match status" value="1"/>
</dbReference>
<dbReference type="Gene3D" id="1.10.10.250">
    <property type="entry name" value="Ribosomal protein L11, C-terminal domain"/>
    <property type="match status" value="1"/>
</dbReference>
<dbReference type="Gene3D" id="3.30.1550.10">
    <property type="entry name" value="Ribosomal protein L11/L12, N-terminal domain"/>
    <property type="match status" value="1"/>
</dbReference>
<dbReference type="HAMAP" id="MF_00736">
    <property type="entry name" value="Ribosomal_uL11"/>
    <property type="match status" value="1"/>
</dbReference>
<dbReference type="InterPro" id="IPR000911">
    <property type="entry name" value="Ribosomal_uL11"/>
</dbReference>
<dbReference type="InterPro" id="IPR006519">
    <property type="entry name" value="Ribosomal_uL11_bac-typ"/>
</dbReference>
<dbReference type="InterPro" id="IPR020783">
    <property type="entry name" value="Ribosomal_uL11_C"/>
</dbReference>
<dbReference type="InterPro" id="IPR036769">
    <property type="entry name" value="Ribosomal_uL11_C_sf"/>
</dbReference>
<dbReference type="InterPro" id="IPR020785">
    <property type="entry name" value="Ribosomal_uL11_CS"/>
</dbReference>
<dbReference type="InterPro" id="IPR020784">
    <property type="entry name" value="Ribosomal_uL11_N"/>
</dbReference>
<dbReference type="InterPro" id="IPR036796">
    <property type="entry name" value="Ribosomal_uL11_N_sf"/>
</dbReference>
<dbReference type="NCBIfam" id="TIGR01632">
    <property type="entry name" value="L11_bact"/>
    <property type="match status" value="1"/>
</dbReference>
<dbReference type="PANTHER" id="PTHR11661">
    <property type="entry name" value="60S RIBOSOMAL PROTEIN L12"/>
    <property type="match status" value="1"/>
</dbReference>
<dbReference type="PANTHER" id="PTHR11661:SF1">
    <property type="entry name" value="LARGE RIBOSOMAL SUBUNIT PROTEIN UL11M"/>
    <property type="match status" value="1"/>
</dbReference>
<dbReference type="Pfam" id="PF00298">
    <property type="entry name" value="Ribosomal_L11"/>
    <property type="match status" value="1"/>
</dbReference>
<dbReference type="Pfam" id="PF03946">
    <property type="entry name" value="Ribosomal_L11_N"/>
    <property type="match status" value="1"/>
</dbReference>
<dbReference type="SMART" id="SM00649">
    <property type="entry name" value="RL11"/>
    <property type="match status" value="1"/>
</dbReference>
<dbReference type="SUPFAM" id="SSF54747">
    <property type="entry name" value="Ribosomal L11/L12e N-terminal domain"/>
    <property type="match status" value="1"/>
</dbReference>
<dbReference type="SUPFAM" id="SSF46906">
    <property type="entry name" value="Ribosomal protein L11, C-terminal domain"/>
    <property type="match status" value="1"/>
</dbReference>
<dbReference type="PROSITE" id="PS00359">
    <property type="entry name" value="RIBOSOMAL_L11"/>
    <property type="match status" value="1"/>
</dbReference>
<gene>
    <name evidence="1" type="primary">rplK</name>
    <name evidence="1" type="synonym">rpl11</name>
    <name type="ordered locus">P9211_02221</name>
</gene>
<keyword id="KW-0488">Methylation</keyword>
<keyword id="KW-1185">Reference proteome</keyword>
<keyword id="KW-0687">Ribonucleoprotein</keyword>
<keyword id="KW-0689">Ribosomal protein</keyword>
<keyword id="KW-0694">RNA-binding</keyword>
<keyword id="KW-0699">rRNA-binding</keyword>
<reference key="1">
    <citation type="journal article" date="2007" name="PLoS Genet.">
        <title>Patterns and implications of gene gain and loss in the evolution of Prochlorococcus.</title>
        <authorList>
            <person name="Kettler G.C."/>
            <person name="Martiny A.C."/>
            <person name="Huang K."/>
            <person name="Zucker J."/>
            <person name="Coleman M.L."/>
            <person name="Rodrigue S."/>
            <person name="Chen F."/>
            <person name="Lapidus A."/>
            <person name="Ferriera S."/>
            <person name="Johnson J."/>
            <person name="Steglich C."/>
            <person name="Church G.M."/>
            <person name="Richardson P."/>
            <person name="Chisholm S.W."/>
        </authorList>
    </citation>
    <scope>NUCLEOTIDE SEQUENCE [LARGE SCALE GENOMIC DNA]</scope>
    <source>
        <strain>MIT 9211</strain>
    </source>
</reference>
<organism>
    <name type="scientific">Prochlorococcus marinus (strain MIT 9211)</name>
    <dbReference type="NCBI Taxonomy" id="93059"/>
    <lineage>
        <taxon>Bacteria</taxon>
        <taxon>Bacillati</taxon>
        <taxon>Cyanobacteriota</taxon>
        <taxon>Cyanophyceae</taxon>
        <taxon>Synechococcales</taxon>
        <taxon>Prochlorococcaceae</taxon>
        <taxon>Prochlorococcus</taxon>
    </lineage>
</organism>